<comment type="function">
    <text evidence="1">Involved in the biosynthesis of ADP-glucose, a building block required for the elongation reactions to produce glycogen. Catalyzes the reaction between ATP and alpha-D-glucose 1-phosphate (G1P) to produce pyrophosphate and ADP-Glc.</text>
</comment>
<comment type="catalytic activity">
    <reaction evidence="1">
        <text>alpha-D-glucose 1-phosphate + ATP + H(+) = ADP-alpha-D-glucose + diphosphate</text>
        <dbReference type="Rhea" id="RHEA:12120"/>
        <dbReference type="ChEBI" id="CHEBI:15378"/>
        <dbReference type="ChEBI" id="CHEBI:30616"/>
        <dbReference type="ChEBI" id="CHEBI:33019"/>
        <dbReference type="ChEBI" id="CHEBI:57498"/>
        <dbReference type="ChEBI" id="CHEBI:58601"/>
        <dbReference type="EC" id="2.7.7.27"/>
    </reaction>
</comment>
<comment type="pathway">
    <text evidence="1">Glycan biosynthesis; glycogen biosynthesis.</text>
</comment>
<comment type="subunit">
    <text evidence="1">Homotetramer.</text>
</comment>
<comment type="similarity">
    <text evidence="1">Belongs to the bacterial/plant glucose-1-phosphate adenylyltransferase family.</text>
</comment>
<proteinExistence type="inferred from homology"/>
<protein>
    <recommendedName>
        <fullName evidence="1">Glucose-1-phosphate adenylyltransferase</fullName>
        <ecNumber evidence="1">2.7.7.27</ecNumber>
    </recommendedName>
    <alternativeName>
        <fullName evidence="1">ADP-glucose pyrophosphorylase</fullName>
        <shortName evidence="1">ADPGlc PPase</shortName>
    </alternativeName>
    <alternativeName>
        <fullName evidence="1">ADP-glucose synthase</fullName>
    </alternativeName>
</protein>
<keyword id="KW-0067">ATP-binding</keyword>
<keyword id="KW-0119">Carbohydrate metabolism</keyword>
<keyword id="KW-0320">Glycogen biosynthesis</keyword>
<keyword id="KW-0321">Glycogen metabolism</keyword>
<keyword id="KW-0547">Nucleotide-binding</keyword>
<keyword id="KW-0548">Nucleotidyltransferase</keyword>
<keyword id="KW-1185">Reference proteome</keyword>
<keyword id="KW-0808">Transferase</keyword>
<reference key="1">
    <citation type="journal article" date="2009" name="PLoS ONE">
        <title>The complete genome of Teredinibacter turnerae T7901: an intracellular endosymbiont of marine wood-boring bivalves (shipworms).</title>
        <authorList>
            <person name="Yang J.C."/>
            <person name="Madupu R."/>
            <person name="Durkin A.S."/>
            <person name="Ekborg N.A."/>
            <person name="Pedamallu C.S."/>
            <person name="Hostetler J.B."/>
            <person name="Radune D."/>
            <person name="Toms B.S."/>
            <person name="Henrissat B."/>
            <person name="Coutinho P.M."/>
            <person name="Schwarz S."/>
            <person name="Field L."/>
            <person name="Trindade-Silva A.E."/>
            <person name="Soares C.A.G."/>
            <person name="Elshahawi S."/>
            <person name="Hanora A."/>
            <person name="Schmidt E.W."/>
            <person name="Haygood M.G."/>
            <person name="Posfai J."/>
            <person name="Benner J."/>
            <person name="Madinger C."/>
            <person name="Nove J."/>
            <person name="Anton B."/>
            <person name="Chaudhary K."/>
            <person name="Foster J."/>
            <person name="Holman A."/>
            <person name="Kumar S."/>
            <person name="Lessard P.A."/>
            <person name="Luyten Y.A."/>
            <person name="Slatko B."/>
            <person name="Wood N."/>
            <person name="Wu B."/>
            <person name="Teplitski M."/>
            <person name="Mougous J.D."/>
            <person name="Ward N."/>
            <person name="Eisen J.A."/>
            <person name="Badger J.H."/>
            <person name="Distel D.L."/>
        </authorList>
    </citation>
    <scope>NUCLEOTIDE SEQUENCE [LARGE SCALE GENOMIC DNA]</scope>
    <source>
        <strain>ATCC 39867 / T7901</strain>
    </source>
</reference>
<sequence length="421" mass="47770">MLDPNSRYVSRLTRDTMALILAGGRGSRLHELTDWRAKPALHFGGKFRIIDFPLSNCVNSGIRRVGVLTQYKAHSLIRHLVRGWSHFKKELGEYVEILPASQRYSPNWYQGTADAIYQNLDIILDEAPKYVMVLSGDHVYQMDYGSMLAYHVETGADLTVSCIEVPIEEAAGAFGVMTVDDNNRILRFDEKPKHPTELNDMPGMTLASMGNYIFNTEFLFEQLRADAENPESEHDFGKNIIPAIIKNSNVRAYRFRDHETDRASYWRDVGTLDSFWLANMELVEPSPQLNLYNQDWPIWTYQTHLPPAKFVFDDDDRRGYAVDSMVSGGCIVSGGKVSKSLLFSDVHVHSYTDLEESVVLPNVQIHRHAKIKRAIIDSGCEIPEGMVIGHDHEHDTARGFRVTKKGVVLVTREMLGQLTPK</sequence>
<dbReference type="EC" id="2.7.7.27" evidence="1"/>
<dbReference type="EMBL" id="CP001614">
    <property type="protein sequence ID" value="ACR13655.1"/>
    <property type="molecule type" value="Genomic_DNA"/>
</dbReference>
<dbReference type="RefSeq" id="WP_015819770.1">
    <property type="nucleotide sequence ID" value="NC_012997.1"/>
</dbReference>
<dbReference type="SMR" id="C5BQ92"/>
<dbReference type="STRING" id="377629.TERTU_0939"/>
<dbReference type="KEGG" id="ttu:TERTU_0939"/>
<dbReference type="eggNOG" id="COG0448">
    <property type="taxonomic scope" value="Bacteria"/>
</dbReference>
<dbReference type="HOGENOM" id="CLU_029499_14_1_6"/>
<dbReference type="OrthoDB" id="9801810at2"/>
<dbReference type="UniPathway" id="UPA00164"/>
<dbReference type="Proteomes" id="UP000009080">
    <property type="component" value="Chromosome"/>
</dbReference>
<dbReference type="GO" id="GO:0005524">
    <property type="term" value="F:ATP binding"/>
    <property type="evidence" value="ECO:0007669"/>
    <property type="project" value="UniProtKB-KW"/>
</dbReference>
<dbReference type="GO" id="GO:0008878">
    <property type="term" value="F:glucose-1-phosphate adenylyltransferase activity"/>
    <property type="evidence" value="ECO:0007669"/>
    <property type="project" value="UniProtKB-UniRule"/>
</dbReference>
<dbReference type="GO" id="GO:0005978">
    <property type="term" value="P:glycogen biosynthetic process"/>
    <property type="evidence" value="ECO:0007669"/>
    <property type="project" value="UniProtKB-UniRule"/>
</dbReference>
<dbReference type="CDD" id="cd02508">
    <property type="entry name" value="ADP_Glucose_PP"/>
    <property type="match status" value="1"/>
</dbReference>
<dbReference type="CDD" id="cd04651">
    <property type="entry name" value="LbH_G1P_AT_C"/>
    <property type="match status" value="1"/>
</dbReference>
<dbReference type="Gene3D" id="2.160.10.10">
    <property type="entry name" value="Hexapeptide repeat proteins"/>
    <property type="match status" value="1"/>
</dbReference>
<dbReference type="Gene3D" id="3.90.550.10">
    <property type="entry name" value="Spore Coat Polysaccharide Biosynthesis Protein SpsA, Chain A"/>
    <property type="match status" value="1"/>
</dbReference>
<dbReference type="HAMAP" id="MF_00624">
    <property type="entry name" value="GlgC"/>
    <property type="match status" value="1"/>
</dbReference>
<dbReference type="InterPro" id="IPR011831">
    <property type="entry name" value="ADP-Glc_PPase"/>
</dbReference>
<dbReference type="InterPro" id="IPR005836">
    <property type="entry name" value="ADP_Glu_pyroP_CS"/>
</dbReference>
<dbReference type="InterPro" id="IPR023049">
    <property type="entry name" value="GlgC_bac"/>
</dbReference>
<dbReference type="InterPro" id="IPR056818">
    <property type="entry name" value="GlmU/GlgC-like_hexapep"/>
</dbReference>
<dbReference type="InterPro" id="IPR005835">
    <property type="entry name" value="NTP_transferase_dom"/>
</dbReference>
<dbReference type="InterPro" id="IPR029044">
    <property type="entry name" value="Nucleotide-diphossugar_trans"/>
</dbReference>
<dbReference type="InterPro" id="IPR011004">
    <property type="entry name" value="Trimer_LpxA-like_sf"/>
</dbReference>
<dbReference type="NCBIfam" id="TIGR02091">
    <property type="entry name" value="glgC"/>
    <property type="match status" value="1"/>
</dbReference>
<dbReference type="NCBIfam" id="NF001947">
    <property type="entry name" value="PRK00725.1"/>
    <property type="match status" value="1"/>
</dbReference>
<dbReference type="NCBIfam" id="NF002023">
    <property type="entry name" value="PRK00844.1"/>
    <property type="match status" value="1"/>
</dbReference>
<dbReference type="PANTHER" id="PTHR43523:SF2">
    <property type="entry name" value="GLUCOSE-1-PHOSPHATE ADENYLYLTRANSFERASE"/>
    <property type="match status" value="1"/>
</dbReference>
<dbReference type="PANTHER" id="PTHR43523">
    <property type="entry name" value="GLUCOSE-1-PHOSPHATE ADENYLYLTRANSFERASE-RELATED"/>
    <property type="match status" value="1"/>
</dbReference>
<dbReference type="Pfam" id="PF24894">
    <property type="entry name" value="Hexapep_GlmU"/>
    <property type="match status" value="1"/>
</dbReference>
<dbReference type="Pfam" id="PF00483">
    <property type="entry name" value="NTP_transferase"/>
    <property type="match status" value="1"/>
</dbReference>
<dbReference type="SUPFAM" id="SSF53448">
    <property type="entry name" value="Nucleotide-diphospho-sugar transferases"/>
    <property type="match status" value="1"/>
</dbReference>
<dbReference type="SUPFAM" id="SSF51161">
    <property type="entry name" value="Trimeric LpxA-like enzymes"/>
    <property type="match status" value="1"/>
</dbReference>
<dbReference type="PROSITE" id="PS00808">
    <property type="entry name" value="ADP_GLC_PYROPHOSPH_1"/>
    <property type="match status" value="1"/>
</dbReference>
<dbReference type="PROSITE" id="PS00809">
    <property type="entry name" value="ADP_GLC_PYROPHOSPH_2"/>
    <property type="match status" value="1"/>
</dbReference>
<dbReference type="PROSITE" id="PS00810">
    <property type="entry name" value="ADP_GLC_PYROPHOSPH_3"/>
    <property type="match status" value="1"/>
</dbReference>
<accession>C5BQ92</accession>
<feature type="chain" id="PRO_1000212305" description="Glucose-1-phosphate adenylyltransferase">
    <location>
        <begin position="1"/>
        <end position="421"/>
    </location>
</feature>
<feature type="binding site" evidence="1">
    <location>
        <position position="109"/>
    </location>
    <ligand>
        <name>alpha-D-glucose 1-phosphate</name>
        <dbReference type="ChEBI" id="CHEBI:58601"/>
    </ligand>
</feature>
<feature type="binding site" evidence="1">
    <location>
        <position position="175"/>
    </location>
    <ligand>
        <name>alpha-D-glucose 1-phosphate</name>
        <dbReference type="ChEBI" id="CHEBI:58601"/>
    </ligand>
</feature>
<feature type="binding site" evidence="1">
    <location>
        <begin position="190"/>
        <end position="191"/>
    </location>
    <ligand>
        <name>alpha-D-glucose 1-phosphate</name>
        <dbReference type="ChEBI" id="CHEBI:58601"/>
    </ligand>
</feature>
<feature type="binding site" evidence="1">
    <location>
        <position position="208"/>
    </location>
    <ligand>
        <name>alpha-D-glucose 1-phosphate</name>
        <dbReference type="ChEBI" id="CHEBI:58601"/>
    </ligand>
</feature>
<gene>
    <name evidence="1" type="primary">glgC</name>
    <name type="ordered locus">TERTU_0939</name>
</gene>
<organism>
    <name type="scientific">Teredinibacter turnerae (strain ATCC 39867 / T7901)</name>
    <dbReference type="NCBI Taxonomy" id="377629"/>
    <lineage>
        <taxon>Bacteria</taxon>
        <taxon>Pseudomonadati</taxon>
        <taxon>Pseudomonadota</taxon>
        <taxon>Gammaproteobacteria</taxon>
        <taxon>Cellvibrionales</taxon>
        <taxon>Cellvibrionaceae</taxon>
        <taxon>Teredinibacter</taxon>
    </lineage>
</organism>
<name>GLGC_TERTT</name>
<evidence type="ECO:0000255" key="1">
    <source>
        <dbReference type="HAMAP-Rule" id="MF_00624"/>
    </source>
</evidence>